<name>MEU22_SCHPO</name>
<organism>
    <name type="scientific">Schizosaccharomyces pombe (strain 972 / ATCC 24843)</name>
    <name type="common">Fission yeast</name>
    <dbReference type="NCBI Taxonomy" id="284812"/>
    <lineage>
        <taxon>Eukaryota</taxon>
        <taxon>Fungi</taxon>
        <taxon>Dikarya</taxon>
        <taxon>Ascomycota</taxon>
        <taxon>Taphrinomycotina</taxon>
        <taxon>Schizosaccharomycetes</taxon>
        <taxon>Schizosaccharomycetales</taxon>
        <taxon>Schizosaccharomycetaceae</taxon>
        <taxon>Schizosaccharomyces</taxon>
    </lineage>
</organism>
<reference key="1">
    <citation type="journal article" date="2002" name="Nature">
        <title>The genome sequence of Schizosaccharomyces pombe.</title>
        <authorList>
            <person name="Wood V."/>
            <person name="Gwilliam R."/>
            <person name="Rajandream M.A."/>
            <person name="Lyne M.H."/>
            <person name="Lyne R."/>
            <person name="Stewart A."/>
            <person name="Sgouros J.G."/>
            <person name="Peat N."/>
            <person name="Hayles J."/>
            <person name="Baker S.G."/>
            <person name="Basham D."/>
            <person name="Bowman S."/>
            <person name="Brooks K."/>
            <person name="Brown D."/>
            <person name="Brown S."/>
            <person name="Chillingworth T."/>
            <person name="Churcher C.M."/>
            <person name="Collins M."/>
            <person name="Connor R."/>
            <person name="Cronin A."/>
            <person name="Davis P."/>
            <person name="Feltwell T."/>
            <person name="Fraser A."/>
            <person name="Gentles S."/>
            <person name="Goble A."/>
            <person name="Hamlin N."/>
            <person name="Harris D.E."/>
            <person name="Hidalgo J."/>
            <person name="Hodgson G."/>
            <person name="Holroyd S."/>
            <person name="Hornsby T."/>
            <person name="Howarth S."/>
            <person name="Huckle E.J."/>
            <person name="Hunt S."/>
            <person name="Jagels K."/>
            <person name="James K.D."/>
            <person name="Jones L."/>
            <person name="Jones M."/>
            <person name="Leather S."/>
            <person name="McDonald S."/>
            <person name="McLean J."/>
            <person name="Mooney P."/>
            <person name="Moule S."/>
            <person name="Mungall K.L."/>
            <person name="Murphy L.D."/>
            <person name="Niblett D."/>
            <person name="Odell C."/>
            <person name="Oliver K."/>
            <person name="O'Neil S."/>
            <person name="Pearson D."/>
            <person name="Quail M.A."/>
            <person name="Rabbinowitsch E."/>
            <person name="Rutherford K.M."/>
            <person name="Rutter S."/>
            <person name="Saunders D."/>
            <person name="Seeger K."/>
            <person name="Sharp S."/>
            <person name="Skelton J."/>
            <person name="Simmonds M.N."/>
            <person name="Squares R."/>
            <person name="Squares S."/>
            <person name="Stevens K."/>
            <person name="Taylor K."/>
            <person name="Taylor R.G."/>
            <person name="Tivey A."/>
            <person name="Walsh S.V."/>
            <person name="Warren T."/>
            <person name="Whitehead S."/>
            <person name="Woodward J.R."/>
            <person name="Volckaert G."/>
            <person name="Aert R."/>
            <person name="Robben J."/>
            <person name="Grymonprez B."/>
            <person name="Weltjens I."/>
            <person name="Vanstreels E."/>
            <person name="Rieger M."/>
            <person name="Schaefer M."/>
            <person name="Mueller-Auer S."/>
            <person name="Gabel C."/>
            <person name="Fuchs M."/>
            <person name="Duesterhoeft A."/>
            <person name="Fritzc C."/>
            <person name="Holzer E."/>
            <person name="Moestl D."/>
            <person name="Hilbert H."/>
            <person name="Borzym K."/>
            <person name="Langer I."/>
            <person name="Beck A."/>
            <person name="Lehrach H."/>
            <person name="Reinhardt R."/>
            <person name="Pohl T.M."/>
            <person name="Eger P."/>
            <person name="Zimmermann W."/>
            <person name="Wedler H."/>
            <person name="Wambutt R."/>
            <person name="Purnelle B."/>
            <person name="Goffeau A."/>
            <person name="Cadieu E."/>
            <person name="Dreano S."/>
            <person name="Gloux S."/>
            <person name="Lelaure V."/>
            <person name="Mottier S."/>
            <person name="Galibert F."/>
            <person name="Aves S.J."/>
            <person name="Xiang Z."/>
            <person name="Hunt C."/>
            <person name="Moore K."/>
            <person name="Hurst S.M."/>
            <person name="Lucas M."/>
            <person name="Rochet M."/>
            <person name="Gaillardin C."/>
            <person name="Tallada V.A."/>
            <person name="Garzon A."/>
            <person name="Thode G."/>
            <person name="Daga R.R."/>
            <person name="Cruzado L."/>
            <person name="Jimenez J."/>
            <person name="Sanchez M."/>
            <person name="del Rey F."/>
            <person name="Benito J."/>
            <person name="Dominguez A."/>
            <person name="Revuelta J.L."/>
            <person name="Moreno S."/>
            <person name="Armstrong J."/>
            <person name="Forsburg S.L."/>
            <person name="Cerutti L."/>
            <person name="Lowe T."/>
            <person name="McCombie W.R."/>
            <person name="Paulsen I."/>
            <person name="Potashkin J."/>
            <person name="Shpakovski G.V."/>
            <person name="Ussery D."/>
            <person name="Barrell B.G."/>
            <person name="Nurse P."/>
        </authorList>
    </citation>
    <scope>NUCLEOTIDE SEQUENCE [LARGE SCALE GENOMIC DNA]</scope>
    <source>
        <strain>972 / ATCC 24843</strain>
    </source>
</reference>
<reference key="2">
    <citation type="journal article" date="2001" name="Nucleic Acids Res.">
        <title>Comprehensive isolation of meiosis-specific genes identifies novel proteins and unusual non-coding transcripts in Schizosaccharomyces pombe.</title>
        <authorList>
            <person name="Watanabe T."/>
            <person name="Miyashita K."/>
            <person name="Saito T.T."/>
            <person name="Yoneki T."/>
            <person name="Kakihara Y."/>
            <person name="Nabeshima K."/>
            <person name="Kishi Y.A."/>
            <person name="Shimoda C."/>
            <person name="Nojima H."/>
        </authorList>
    </citation>
    <scope>NUCLEOTIDE SEQUENCE [MRNA] OF 23-356</scope>
    <source>
        <strain>CD16-1</strain>
    </source>
</reference>
<evidence type="ECO:0000255" key="1"/>
<evidence type="ECO:0000305" key="2"/>
<keyword id="KW-0029">Amino-acid transport</keyword>
<keyword id="KW-0469">Meiosis</keyword>
<keyword id="KW-0472">Membrane</keyword>
<keyword id="KW-1185">Reference proteome</keyword>
<keyword id="KW-0812">Transmembrane</keyword>
<keyword id="KW-1133">Transmembrane helix</keyword>
<keyword id="KW-0813">Transport</keyword>
<dbReference type="EMBL" id="CU329671">
    <property type="protein sequence ID" value="CAA19126.1"/>
    <property type="molecule type" value="Genomic_DNA"/>
</dbReference>
<dbReference type="EMBL" id="AB054306">
    <property type="protein sequence ID" value="BAB60873.1"/>
    <property type="molecule type" value="mRNA"/>
</dbReference>
<dbReference type="PIR" id="T39829">
    <property type="entry name" value="T39829"/>
</dbReference>
<dbReference type="RefSeq" id="NP_596348.1">
    <property type="nucleotide sequence ID" value="NM_001022268.2"/>
</dbReference>
<dbReference type="SMR" id="O60170"/>
<dbReference type="BioGRID" id="277298">
    <property type="interactions" value="21"/>
</dbReference>
<dbReference type="FunCoup" id="O60170">
    <property type="interactions" value="123"/>
</dbReference>
<dbReference type="STRING" id="284812.O60170"/>
<dbReference type="TCDB" id="2.A.3.10.28">
    <property type="family name" value="the amino acid-polyamine-organocation (apc) family"/>
</dbReference>
<dbReference type="PaxDb" id="4896-SPBC19F8.06c.1"/>
<dbReference type="EnsemblFungi" id="SPBC19F8.06c.1">
    <property type="protein sequence ID" value="SPBC19F8.06c.1:pep"/>
    <property type="gene ID" value="SPBC19F8.06c"/>
</dbReference>
<dbReference type="GeneID" id="2540779"/>
<dbReference type="KEGG" id="spo:2540779"/>
<dbReference type="PomBase" id="SPBC19F8.06c">
    <property type="gene designation" value="meu22"/>
</dbReference>
<dbReference type="VEuPathDB" id="FungiDB:SPBC19F8.06c"/>
<dbReference type="eggNOG" id="KOG1286">
    <property type="taxonomic scope" value="Eukaryota"/>
</dbReference>
<dbReference type="HOGENOM" id="CLU_007946_12_0_1"/>
<dbReference type="InParanoid" id="O60170"/>
<dbReference type="OMA" id="NYALFWV"/>
<dbReference type="PhylomeDB" id="O60170"/>
<dbReference type="PRO" id="PR:O60170"/>
<dbReference type="Proteomes" id="UP000002485">
    <property type="component" value="Chromosome II"/>
</dbReference>
<dbReference type="GO" id="GO:0016020">
    <property type="term" value="C:membrane"/>
    <property type="evidence" value="ECO:0000318"/>
    <property type="project" value="GO_Central"/>
</dbReference>
<dbReference type="GO" id="GO:0015171">
    <property type="term" value="F:amino acid transmembrane transporter activity"/>
    <property type="evidence" value="ECO:0000318"/>
    <property type="project" value="GO_Central"/>
</dbReference>
<dbReference type="GO" id="GO:0003333">
    <property type="term" value="P:amino acid transmembrane transport"/>
    <property type="evidence" value="ECO:0000318"/>
    <property type="project" value="GO_Central"/>
</dbReference>
<dbReference type="GO" id="GO:0051321">
    <property type="term" value="P:meiotic cell cycle"/>
    <property type="evidence" value="ECO:0007669"/>
    <property type="project" value="UniProtKB-KW"/>
</dbReference>
<dbReference type="FunFam" id="1.20.1740.10:FF:000001">
    <property type="entry name" value="Amino acid permease"/>
    <property type="match status" value="1"/>
</dbReference>
<dbReference type="Gene3D" id="1.20.1740.10">
    <property type="entry name" value="Amino acid/polyamine transporter I"/>
    <property type="match status" value="1"/>
</dbReference>
<dbReference type="InterPro" id="IPR004841">
    <property type="entry name" value="AA-permease/SLC12A_dom"/>
</dbReference>
<dbReference type="InterPro" id="IPR004840">
    <property type="entry name" value="Amino_acid_permease_CS"/>
</dbReference>
<dbReference type="InterPro" id="IPR050524">
    <property type="entry name" value="APC_YAT"/>
</dbReference>
<dbReference type="PANTHER" id="PTHR43341">
    <property type="entry name" value="AMINO ACID PERMEASE"/>
    <property type="match status" value="1"/>
</dbReference>
<dbReference type="PANTHER" id="PTHR43341:SF44">
    <property type="entry name" value="AMINO-ACID PERMEASE MEU22-RELATED"/>
    <property type="match status" value="1"/>
</dbReference>
<dbReference type="Pfam" id="PF00324">
    <property type="entry name" value="AA_permease"/>
    <property type="match status" value="1"/>
</dbReference>
<dbReference type="PIRSF" id="PIRSF006060">
    <property type="entry name" value="AA_transporter"/>
    <property type="match status" value="1"/>
</dbReference>
<dbReference type="PROSITE" id="PS00218">
    <property type="entry name" value="AMINO_ACID_PERMEASE_1"/>
    <property type="match status" value="1"/>
</dbReference>
<protein>
    <recommendedName>
        <fullName>Probable amino-acid permease meu22</fullName>
    </recommendedName>
    <alternativeName>
        <fullName>Meiotic expression up-regulated protein 22</fullName>
    </alternativeName>
</protein>
<feature type="chain" id="PRO_0000054168" description="Probable amino-acid permease meu22">
    <location>
        <begin position="1"/>
        <end position="574"/>
    </location>
</feature>
<feature type="transmembrane region" description="Helical" evidence="1">
    <location>
        <begin position="69"/>
        <end position="89"/>
    </location>
</feature>
<feature type="transmembrane region" description="Helical" evidence="1">
    <location>
        <begin position="94"/>
        <end position="114"/>
    </location>
</feature>
<feature type="transmembrane region" description="Helical" evidence="1">
    <location>
        <begin position="173"/>
        <end position="193"/>
    </location>
</feature>
<feature type="transmembrane region" description="Helical" evidence="1">
    <location>
        <begin position="202"/>
        <end position="222"/>
    </location>
</feature>
<feature type="transmembrane region" description="Helical" evidence="1">
    <location>
        <begin position="291"/>
        <end position="311"/>
    </location>
</feature>
<feature type="transmembrane region" description="Helical" evidence="1">
    <location>
        <begin position="391"/>
        <end position="411"/>
    </location>
</feature>
<feature type="transmembrane region" description="Helical" evidence="1">
    <location>
        <begin position="412"/>
        <end position="432"/>
    </location>
</feature>
<feature type="transmembrane region" description="Helical" evidence="1">
    <location>
        <begin position="470"/>
        <end position="490"/>
    </location>
</feature>
<feature type="transmembrane region" description="Helical" evidence="1">
    <location>
        <begin position="498"/>
        <end position="518"/>
    </location>
</feature>
<gene>
    <name type="primary">meu22</name>
    <name type="ORF">SPBC19F8.06c</name>
</gene>
<sequence length="574" mass="62691">MLSKFYEDIDSKLENAMLSQIESSTITCDGKSLNTLPTPKQEDVEFGVPLQPEDTQDLQRKLKPRHMQMIAIGGCVGTGLFVGSGNALADGGPASILIAFAVIGTYVLFTTSALAELSAIYPVSGSFYTYFSKFIDPAWGFAVGIQYWLSFAVTVPLELTVAPLIINFWNASGPVSIWISVFYVIIIAINIWGTEGYGEVEFFLSIMKVISVIGFVILSIIIAAGGVPTDDRGVIGVSYWKQPLVFNNGFKGLCAVSVIAIFSLSGTELVGLAASEAKNPQKTVPAAVKQIFWRIFLFYIVALFMLTLVVPSDLPGLRTSDNSNVLISPFVIAIQLANIRALPSIMNVVILLSTLSVGNSASYAASRALFALAKNGYAPKIFNKTNKRGHPIYAIAVTLLFGSIAYFTEAGVGGALFGWLLSICGLSTTFIWGSICLAHIQFRRAWKIQNRKLEDLPYRSIFGVYGSIYGVAMTILALIAQFYVAVFPIGKKPNPVDFFQAYMAAPILIISFVAWKFFRRTSFVRIEKIDLSEGAHGEQKQNLEPVINIPVEEIDFPMKVATKESMKNVEKNAL</sequence>
<accession>O60170</accession>
<accession>Q96WS2</accession>
<proteinExistence type="evidence at transcript level"/>
<comment type="subcellular location">
    <subcellularLocation>
        <location evidence="2">Membrane</location>
        <topology evidence="2">Multi-pass membrane protein</topology>
    </subcellularLocation>
</comment>
<comment type="similarity">
    <text evidence="2">Belongs to the amino acid-polyamine-organocation (APC) superfamily.</text>
</comment>